<keyword id="KW-1185">Reference proteome</keyword>
<keyword id="KW-0687">Ribonucleoprotein</keyword>
<keyword id="KW-0689">Ribosomal protein</keyword>
<keyword id="KW-0694">RNA-binding</keyword>
<keyword id="KW-0699">rRNA-binding</keyword>
<keyword id="KW-0820">tRNA-binding</keyword>
<sequence>MAARLRTKYKKEIVPELNKKFKFSSIMQVPRLEKIVLNVGMGEAHTNPKALEAAVEELALITGQRPVKTKAKKSIAGFKIREGMSLGCMVTLRGDYMYEFLDRLVNVALPRVRDFKGVSEKGFDGRGNYNMSIKEQIIFPEIKVDKINTLYGINMTFVTNSKSNEEAYSLLAAFGMPYRNQK</sequence>
<gene>
    <name evidence="1" type="primary">rplE</name>
    <name type="ordered locus">LA_0751</name>
</gene>
<reference key="1">
    <citation type="journal article" date="2000" name="FEMS Microbiol. Lett.">
        <title>Characterization of the Leptospira interrogans S10-spc-alpha operon.</title>
        <authorList>
            <person name="Zuerner R.L."/>
            <person name="Hartskeerl R.A."/>
            <person name="van de Kemp H."/>
            <person name="Bal A.E."/>
        </authorList>
    </citation>
    <scope>NUCLEOTIDE SEQUENCE [GENOMIC DNA]</scope>
    <source>
        <strain>Lai / Serogroup Icterohaemorrhagiae / Serovar lai</strain>
    </source>
</reference>
<reference key="2">
    <citation type="journal article" date="2003" name="Nature">
        <title>Unique physiological and pathogenic features of Leptospira interrogans revealed by whole-genome sequencing.</title>
        <authorList>
            <person name="Ren S.-X."/>
            <person name="Fu G."/>
            <person name="Jiang X.-G."/>
            <person name="Zeng R."/>
            <person name="Miao Y.-G."/>
            <person name="Xu H."/>
            <person name="Zhang Y.-X."/>
            <person name="Xiong H."/>
            <person name="Lu G."/>
            <person name="Lu L.-F."/>
            <person name="Jiang H.-Q."/>
            <person name="Jia J."/>
            <person name="Tu Y.-F."/>
            <person name="Jiang J.-X."/>
            <person name="Gu W.-Y."/>
            <person name="Zhang Y.-Q."/>
            <person name="Cai Z."/>
            <person name="Sheng H.-H."/>
            <person name="Yin H.-F."/>
            <person name="Zhang Y."/>
            <person name="Zhu G.-F."/>
            <person name="Wan M."/>
            <person name="Huang H.-L."/>
            <person name="Qian Z."/>
            <person name="Wang S.-Y."/>
            <person name="Ma W."/>
            <person name="Yao Z.-J."/>
            <person name="Shen Y."/>
            <person name="Qiang B.-Q."/>
            <person name="Xia Q.-C."/>
            <person name="Guo X.-K."/>
            <person name="Danchin A."/>
            <person name="Saint Girons I."/>
            <person name="Somerville R.L."/>
            <person name="Wen Y.-M."/>
            <person name="Shi M.-H."/>
            <person name="Chen Z."/>
            <person name="Xu J.-G."/>
            <person name="Zhao G.-P."/>
        </authorList>
    </citation>
    <scope>NUCLEOTIDE SEQUENCE [LARGE SCALE GENOMIC DNA]</scope>
    <source>
        <strain>56601</strain>
    </source>
</reference>
<evidence type="ECO:0000255" key="1">
    <source>
        <dbReference type="HAMAP-Rule" id="MF_01333"/>
    </source>
</evidence>
<evidence type="ECO:0000305" key="2"/>
<proteinExistence type="inferred from homology"/>
<feature type="chain" id="PRO_0000124941" description="Large ribosomal subunit protein uL5">
    <location>
        <begin position="1"/>
        <end position="182"/>
    </location>
</feature>
<feature type="sequence conflict" description="In Ref. 1; AAD40595." evidence="2" ref="1">
    <original>I</original>
    <variation>V</variation>
    <location>
        <position position="137"/>
    </location>
</feature>
<dbReference type="EMBL" id="AF115283">
    <property type="protein sequence ID" value="AAD40595.1"/>
    <property type="molecule type" value="Genomic_DNA"/>
</dbReference>
<dbReference type="EMBL" id="AE010300">
    <property type="protein sequence ID" value="AAN47950.1"/>
    <property type="molecule type" value="Genomic_DNA"/>
</dbReference>
<dbReference type="RefSeq" id="NP_710932.1">
    <property type="nucleotide sequence ID" value="NC_004342.2"/>
</dbReference>
<dbReference type="RefSeq" id="WP_000741297.1">
    <property type="nucleotide sequence ID" value="NC_004342.2"/>
</dbReference>
<dbReference type="SMR" id="Q9XD24"/>
<dbReference type="FunCoup" id="Q9XD24">
    <property type="interactions" value="559"/>
</dbReference>
<dbReference type="STRING" id="189518.LA_0751"/>
<dbReference type="PaxDb" id="189518-LA_0751"/>
<dbReference type="EnsemblBacteria" id="AAN47950">
    <property type="protein sequence ID" value="AAN47950"/>
    <property type="gene ID" value="LA_0751"/>
</dbReference>
<dbReference type="GeneID" id="61142735"/>
<dbReference type="KEGG" id="lil:LA_0751"/>
<dbReference type="PATRIC" id="fig|189518.3.peg.757"/>
<dbReference type="HOGENOM" id="CLU_061015_2_1_12"/>
<dbReference type="InParanoid" id="Q9XD24"/>
<dbReference type="OrthoDB" id="9806626at2"/>
<dbReference type="Proteomes" id="UP000001408">
    <property type="component" value="Chromosome I"/>
</dbReference>
<dbReference type="GO" id="GO:0022625">
    <property type="term" value="C:cytosolic large ribosomal subunit"/>
    <property type="evidence" value="ECO:0000318"/>
    <property type="project" value="GO_Central"/>
</dbReference>
<dbReference type="GO" id="GO:0003723">
    <property type="term" value="F:RNA binding"/>
    <property type="evidence" value="ECO:0000318"/>
    <property type="project" value="GO_Central"/>
</dbReference>
<dbReference type="GO" id="GO:0019843">
    <property type="term" value="F:rRNA binding"/>
    <property type="evidence" value="ECO:0007669"/>
    <property type="project" value="UniProtKB-UniRule"/>
</dbReference>
<dbReference type="GO" id="GO:0003735">
    <property type="term" value="F:structural constituent of ribosome"/>
    <property type="evidence" value="ECO:0000318"/>
    <property type="project" value="GO_Central"/>
</dbReference>
<dbReference type="GO" id="GO:0000049">
    <property type="term" value="F:tRNA binding"/>
    <property type="evidence" value="ECO:0007669"/>
    <property type="project" value="UniProtKB-UniRule"/>
</dbReference>
<dbReference type="GO" id="GO:0006412">
    <property type="term" value="P:translation"/>
    <property type="evidence" value="ECO:0000318"/>
    <property type="project" value="GO_Central"/>
</dbReference>
<dbReference type="FunFam" id="3.30.1440.10:FF:000001">
    <property type="entry name" value="50S ribosomal protein L5"/>
    <property type="match status" value="1"/>
</dbReference>
<dbReference type="Gene3D" id="3.30.1440.10">
    <property type="match status" value="1"/>
</dbReference>
<dbReference type="HAMAP" id="MF_01333_B">
    <property type="entry name" value="Ribosomal_uL5_B"/>
    <property type="match status" value="1"/>
</dbReference>
<dbReference type="InterPro" id="IPR002132">
    <property type="entry name" value="Ribosomal_uL5"/>
</dbReference>
<dbReference type="InterPro" id="IPR020930">
    <property type="entry name" value="Ribosomal_uL5_bac-type"/>
</dbReference>
<dbReference type="InterPro" id="IPR031309">
    <property type="entry name" value="Ribosomal_uL5_C"/>
</dbReference>
<dbReference type="InterPro" id="IPR020929">
    <property type="entry name" value="Ribosomal_uL5_CS"/>
</dbReference>
<dbReference type="InterPro" id="IPR022803">
    <property type="entry name" value="Ribosomal_uL5_dom_sf"/>
</dbReference>
<dbReference type="InterPro" id="IPR031310">
    <property type="entry name" value="Ribosomal_uL5_N"/>
</dbReference>
<dbReference type="NCBIfam" id="NF000585">
    <property type="entry name" value="PRK00010.1"/>
    <property type="match status" value="1"/>
</dbReference>
<dbReference type="PANTHER" id="PTHR11994">
    <property type="entry name" value="60S RIBOSOMAL PROTEIN L11-RELATED"/>
    <property type="match status" value="1"/>
</dbReference>
<dbReference type="Pfam" id="PF00281">
    <property type="entry name" value="Ribosomal_L5"/>
    <property type="match status" value="1"/>
</dbReference>
<dbReference type="Pfam" id="PF00673">
    <property type="entry name" value="Ribosomal_L5_C"/>
    <property type="match status" value="1"/>
</dbReference>
<dbReference type="PIRSF" id="PIRSF002161">
    <property type="entry name" value="Ribosomal_L5"/>
    <property type="match status" value="1"/>
</dbReference>
<dbReference type="SUPFAM" id="SSF55282">
    <property type="entry name" value="RL5-like"/>
    <property type="match status" value="1"/>
</dbReference>
<dbReference type="PROSITE" id="PS00358">
    <property type="entry name" value="RIBOSOMAL_L5"/>
    <property type="match status" value="1"/>
</dbReference>
<comment type="function">
    <text evidence="1">This is one of the proteins that bind and probably mediate the attachment of the 5S RNA into the large ribosomal subunit, where it forms part of the central protuberance. In the 70S ribosome it contacts protein S13 of the 30S subunit (bridge B1b), connecting the 2 subunits; this bridge is implicated in subunit movement. Contacts the P site tRNA; the 5S rRNA and some of its associated proteins might help stabilize positioning of ribosome-bound tRNAs.</text>
</comment>
<comment type="subunit">
    <text evidence="1">Part of the 50S ribosomal subunit; part of the 5S rRNA/L5/L18/L25 subcomplex. Contacts the 5S rRNA and the P site tRNA. Forms a bridge to the 30S subunit in the 70S ribosome.</text>
</comment>
<comment type="similarity">
    <text evidence="1">Belongs to the universal ribosomal protein uL5 family.</text>
</comment>
<protein>
    <recommendedName>
        <fullName evidence="1">Large ribosomal subunit protein uL5</fullName>
    </recommendedName>
    <alternativeName>
        <fullName evidence="2">50S ribosomal protein L5</fullName>
    </alternativeName>
</protein>
<accession>Q9XD24</accession>
<name>RL5_LEPIN</name>
<organism>
    <name type="scientific">Leptospira interrogans serogroup Icterohaemorrhagiae serovar Lai (strain 56601)</name>
    <dbReference type="NCBI Taxonomy" id="189518"/>
    <lineage>
        <taxon>Bacteria</taxon>
        <taxon>Pseudomonadati</taxon>
        <taxon>Spirochaetota</taxon>
        <taxon>Spirochaetia</taxon>
        <taxon>Leptospirales</taxon>
        <taxon>Leptospiraceae</taxon>
        <taxon>Leptospira</taxon>
    </lineage>
</organism>